<comment type="function">
    <text evidence="1">One of the essential components for the initiation of protein synthesis. Stabilizes the binding of IF-2 and IF-3 on the 30S subunit to which N-formylmethionyl-tRNA(fMet) subsequently binds. Helps modulate mRNA selection, yielding the 30S pre-initiation complex (PIC). Upon addition of the 50S ribosomal subunit IF-1, IF-2 and IF-3 are released leaving the mature 70S translation initiation complex.</text>
</comment>
<comment type="subunit">
    <text evidence="1">Component of the 30S ribosomal translation pre-initiation complex which assembles on the 30S ribosome in the order IF-2 and IF-3, IF-1 and N-formylmethionyl-tRNA(fMet); mRNA recruitment can occur at any time during PIC assembly.</text>
</comment>
<comment type="subcellular location">
    <subcellularLocation>
        <location evidence="1">Cytoplasm</location>
    </subcellularLocation>
</comment>
<comment type="similarity">
    <text evidence="1">Belongs to the IF-1 family.</text>
</comment>
<organism>
    <name type="scientific">Mycoplasmopsis synoviae (strain 53)</name>
    <name type="common">Mycoplasma synoviae</name>
    <dbReference type="NCBI Taxonomy" id="262723"/>
    <lineage>
        <taxon>Bacteria</taxon>
        <taxon>Bacillati</taxon>
        <taxon>Mycoplasmatota</taxon>
        <taxon>Mycoplasmoidales</taxon>
        <taxon>Metamycoplasmataceae</taxon>
        <taxon>Mycoplasmopsis</taxon>
    </lineage>
</organism>
<reference key="1">
    <citation type="journal article" date="2005" name="J. Bacteriol.">
        <title>Swine and poultry pathogens: the complete genome sequences of two strains of Mycoplasma hyopneumoniae and a strain of Mycoplasma synoviae.</title>
        <authorList>
            <person name="Vasconcelos A.T.R."/>
            <person name="Ferreira H.B."/>
            <person name="Bizarro C.V."/>
            <person name="Bonatto S.L."/>
            <person name="Carvalho M.O."/>
            <person name="Pinto P.M."/>
            <person name="Almeida D.F."/>
            <person name="Almeida L.G.P."/>
            <person name="Almeida R."/>
            <person name="Alves-Junior L."/>
            <person name="Assuncao E.N."/>
            <person name="Azevedo V.A.C."/>
            <person name="Bogo M.R."/>
            <person name="Brigido M.M."/>
            <person name="Brocchi M."/>
            <person name="Burity H.A."/>
            <person name="Camargo A.A."/>
            <person name="Camargo S.S."/>
            <person name="Carepo M.S."/>
            <person name="Carraro D.M."/>
            <person name="de Mattos Cascardo J.C."/>
            <person name="Castro L.A."/>
            <person name="Cavalcanti G."/>
            <person name="Chemale G."/>
            <person name="Collevatti R.G."/>
            <person name="Cunha C.W."/>
            <person name="Dallagiovanna B."/>
            <person name="Dambros B.P."/>
            <person name="Dellagostin O.A."/>
            <person name="Falcao C."/>
            <person name="Fantinatti-Garboggini F."/>
            <person name="Felipe M.S.S."/>
            <person name="Fiorentin L."/>
            <person name="Franco G.R."/>
            <person name="Freitas N.S.A."/>
            <person name="Frias D."/>
            <person name="Grangeiro T.B."/>
            <person name="Grisard E.C."/>
            <person name="Guimaraes C.T."/>
            <person name="Hungria M."/>
            <person name="Jardim S.N."/>
            <person name="Krieger M.A."/>
            <person name="Laurino J.P."/>
            <person name="Lima L.F.A."/>
            <person name="Lopes M.I."/>
            <person name="Loreto E.L.S."/>
            <person name="Madeira H.M.F."/>
            <person name="Manfio G.P."/>
            <person name="Maranhao A.Q."/>
            <person name="Martinkovics C.T."/>
            <person name="Medeiros S.R.B."/>
            <person name="Moreira M.A.M."/>
            <person name="Neiva M."/>
            <person name="Ramalho-Neto C.E."/>
            <person name="Nicolas M.F."/>
            <person name="Oliveira S.C."/>
            <person name="Paixao R.F.C."/>
            <person name="Pedrosa F.O."/>
            <person name="Pena S.D.J."/>
            <person name="Pereira M."/>
            <person name="Pereira-Ferrari L."/>
            <person name="Piffer I."/>
            <person name="Pinto L.S."/>
            <person name="Potrich D.P."/>
            <person name="Salim A.C.M."/>
            <person name="Santos F.R."/>
            <person name="Schmitt R."/>
            <person name="Schneider M.P.C."/>
            <person name="Schrank A."/>
            <person name="Schrank I.S."/>
            <person name="Schuck A.F."/>
            <person name="Seuanez H.N."/>
            <person name="Silva D.W."/>
            <person name="Silva R."/>
            <person name="Silva S.C."/>
            <person name="Soares C.M.A."/>
            <person name="Souza K.R.L."/>
            <person name="Souza R.C."/>
            <person name="Staats C.C."/>
            <person name="Steffens M.B.R."/>
            <person name="Teixeira S.M.R."/>
            <person name="Urmenyi T.P."/>
            <person name="Vainstein M.H."/>
            <person name="Zuccherato L.W."/>
            <person name="Simpson A.J.G."/>
            <person name="Zaha A."/>
        </authorList>
    </citation>
    <scope>NUCLEOTIDE SEQUENCE [LARGE SCALE GENOMIC DNA]</scope>
    <source>
        <strain>53</strain>
    </source>
</reference>
<accession>Q4A5I6</accession>
<proteinExistence type="inferred from homology"/>
<dbReference type="EMBL" id="AE017245">
    <property type="protein sequence ID" value="AAZ43985.1"/>
    <property type="molecule type" value="Genomic_DNA"/>
</dbReference>
<dbReference type="RefSeq" id="WP_011283714.1">
    <property type="nucleotide sequence ID" value="NC_007294.1"/>
</dbReference>
<dbReference type="SMR" id="Q4A5I6"/>
<dbReference type="STRING" id="262723.MS53_0578"/>
<dbReference type="GeneID" id="93530370"/>
<dbReference type="KEGG" id="msy:MS53_0578"/>
<dbReference type="eggNOG" id="COG0361">
    <property type="taxonomic scope" value="Bacteria"/>
</dbReference>
<dbReference type="HOGENOM" id="CLU_151267_1_0_14"/>
<dbReference type="OrthoDB" id="9803250at2"/>
<dbReference type="Proteomes" id="UP000000549">
    <property type="component" value="Chromosome"/>
</dbReference>
<dbReference type="GO" id="GO:0005829">
    <property type="term" value="C:cytosol"/>
    <property type="evidence" value="ECO:0007669"/>
    <property type="project" value="TreeGrafter"/>
</dbReference>
<dbReference type="GO" id="GO:0043022">
    <property type="term" value="F:ribosome binding"/>
    <property type="evidence" value="ECO:0007669"/>
    <property type="project" value="UniProtKB-UniRule"/>
</dbReference>
<dbReference type="GO" id="GO:0019843">
    <property type="term" value="F:rRNA binding"/>
    <property type="evidence" value="ECO:0007669"/>
    <property type="project" value="UniProtKB-UniRule"/>
</dbReference>
<dbReference type="GO" id="GO:0003743">
    <property type="term" value="F:translation initiation factor activity"/>
    <property type="evidence" value="ECO:0007669"/>
    <property type="project" value="UniProtKB-UniRule"/>
</dbReference>
<dbReference type="CDD" id="cd04451">
    <property type="entry name" value="S1_IF1"/>
    <property type="match status" value="1"/>
</dbReference>
<dbReference type="FunFam" id="2.40.50.140:FF:000002">
    <property type="entry name" value="Translation initiation factor IF-1"/>
    <property type="match status" value="1"/>
</dbReference>
<dbReference type="Gene3D" id="2.40.50.140">
    <property type="entry name" value="Nucleic acid-binding proteins"/>
    <property type="match status" value="1"/>
</dbReference>
<dbReference type="HAMAP" id="MF_00075">
    <property type="entry name" value="IF_1"/>
    <property type="match status" value="1"/>
</dbReference>
<dbReference type="InterPro" id="IPR012340">
    <property type="entry name" value="NA-bd_OB-fold"/>
</dbReference>
<dbReference type="InterPro" id="IPR006196">
    <property type="entry name" value="RNA-binding_domain_S1_IF1"/>
</dbReference>
<dbReference type="InterPro" id="IPR004368">
    <property type="entry name" value="TIF_IF1"/>
</dbReference>
<dbReference type="NCBIfam" id="TIGR00008">
    <property type="entry name" value="infA"/>
    <property type="match status" value="1"/>
</dbReference>
<dbReference type="PANTHER" id="PTHR33370">
    <property type="entry name" value="TRANSLATION INITIATION FACTOR IF-1, CHLOROPLASTIC"/>
    <property type="match status" value="1"/>
</dbReference>
<dbReference type="PANTHER" id="PTHR33370:SF1">
    <property type="entry name" value="TRANSLATION INITIATION FACTOR IF-1, CHLOROPLASTIC"/>
    <property type="match status" value="1"/>
</dbReference>
<dbReference type="Pfam" id="PF01176">
    <property type="entry name" value="eIF-1a"/>
    <property type="match status" value="1"/>
</dbReference>
<dbReference type="SUPFAM" id="SSF50249">
    <property type="entry name" value="Nucleic acid-binding proteins"/>
    <property type="match status" value="1"/>
</dbReference>
<dbReference type="PROSITE" id="PS50832">
    <property type="entry name" value="S1_IF1_TYPE"/>
    <property type="match status" value="1"/>
</dbReference>
<keyword id="KW-0963">Cytoplasm</keyword>
<keyword id="KW-0396">Initiation factor</keyword>
<keyword id="KW-0648">Protein biosynthesis</keyword>
<keyword id="KW-1185">Reference proteome</keyword>
<keyword id="KW-0694">RNA-binding</keyword>
<keyword id="KW-0699">rRNA-binding</keyword>
<sequence length="71" mass="8238">MAKDAIKLRAKVLEAYSMDDYLVELENKQQIKAKISGKMRVNRIRILPGDLVDVELSSYDLTKGRITYRHK</sequence>
<name>IF1_MYCS5</name>
<feature type="chain" id="PRO_0000263825" description="Translation initiation factor IF-1">
    <location>
        <begin position="1"/>
        <end position="71"/>
    </location>
</feature>
<feature type="domain" description="S1-like" evidence="1">
    <location>
        <begin position="1"/>
        <end position="71"/>
    </location>
</feature>
<protein>
    <recommendedName>
        <fullName evidence="1">Translation initiation factor IF-1</fullName>
    </recommendedName>
</protein>
<gene>
    <name evidence="1" type="primary">infA</name>
    <name type="ordered locus">MS53_0578</name>
</gene>
<evidence type="ECO:0000255" key="1">
    <source>
        <dbReference type="HAMAP-Rule" id="MF_00075"/>
    </source>
</evidence>